<gene>
    <name evidence="2" type="primary">hisB</name>
    <name type="ordered locus">SA2468</name>
</gene>
<protein>
    <recommendedName>
        <fullName evidence="2">Imidazoleglycerol-phosphate dehydratase</fullName>
        <shortName evidence="2">IGPD</shortName>
        <ecNumber evidence="2">4.2.1.19</ecNumber>
    </recommendedName>
</protein>
<name>HIS7_STAAN</name>
<feature type="chain" id="PRO_0000158167" description="Imidazoleglycerol-phosphate dehydratase">
    <location>
        <begin position="1"/>
        <end position="192"/>
    </location>
</feature>
<feature type="binding site" evidence="1">
    <location>
        <position position="11"/>
    </location>
    <ligand>
        <name>substrate</name>
    </ligand>
</feature>
<feature type="binding site" evidence="1">
    <location>
        <begin position="36"/>
        <end position="44"/>
    </location>
    <ligand>
        <name>substrate</name>
    </ligand>
</feature>
<feature type="binding site" evidence="3 4">
    <location>
        <position position="36"/>
    </location>
    <ligand>
        <name>Mn(2+)</name>
        <dbReference type="ChEBI" id="CHEBI:29035"/>
        <label>1</label>
    </ligand>
</feature>
<feature type="binding site" evidence="1">
    <location>
        <begin position="62"/>
        <end position="66"/>
    </location>
    <ligand>
        <name>substrate</name>
    </ligand>
</feature>
<feature type="binding site" evidence="3 4">
    <location>
        <position position="62"/>
    </location>
    <ligand>
        <name>Mn(2+)</name>
        <dbReference type="ChEBI" id="CHEBI:29035"/>
        <label>2</label>
    </ligand>
</feature>
<feature type="binding site" evidence="3 4">
    <location>
        <position position="63"/>
    </location>
    <ligand>
        <name>Mn(2+)</name>
        <dbReference type="ChEBI" id="CHEBI:29035"/>
        <label>1</label>
    </ligand>
</feature>
<feature type="binding site" evidence="3 4">
    <location>
        <position position="66"/>
    </location>
    <ligand>
        <name>Mn(2+)</name>
        <dbReference type="ChEBI" id="CHEBI:29035"/>
        <label>2</label>
    </ligand>
</feature>
<feature type="binding site" evidence="1">
    <location>
        <position position="88"/>
    </location>
    <ligand>
        <name>substrate</name>
    </ligand>
</feature>
<feature type="binding site" evidence="1">
    <location>
        <position position="110"/>
    </location>
    <ligand>
        <name>substrate</name>
    </ligand>
</feature>
<feature type="binding site" evidence="3 4">
    <location>
        <position position="134"/>
    </location>
    <ligand>
        <name>Mn(2+)</name>
        <dbReference type="ChEBI" id="CHEBI:29035"/>
        <label>2</label>
    </ligand>
</feature>
<feature type="binding site" evidence="1">
    <location>
        <begin position="158"/>
        <end position="166"/>
    </location>
    <ligand>
        <name>substrate</name>
    </ligand>
</feature>
<feature type="binding site" evidence="3 4">
    <location>
        <position position="158"/>
    </location>
    <ligand>
        <name>Mn(2+)</name>
        <dbReference type="ChEBI" id="CHEBI:29035"/>
        <label>1</label>
    </ligand>
</feature>
<feature type="binding site" evidence="3 4">
    <location>
        <position position="159"/>
    </location>
    <ligand>
        <name>Mn(2+)</name>
        <dbReference type="ChEBI" id="CHEBI:29035"/>
        <label>2</label>
    </ligand>
</feature>
<feature type="binding site" evidence="3 4">
    <location>
        <position position="162"/>
    </location>
    <ligand>
        <name>Mn(2+)</name>
        <dbReference type="ChEBI" id="CHEBI:29035"/>
        <label>1</label>
    </ligand>
</feature>
<feature type="binding site" evidence="1">
    <location>
        <begin position="186"/>
        <end position="188"/>
    </location>
    <ligand>
        <name>substrate</name>
    </ligand>
</feature>
<feature type="strand" evidence="5">
    <location>
        <begin position="2"/>
        <end position="7"/>
    </location>
</feature>
<feature type="strand" evidence="5">
    <location>
        <begin position="13"/>
        <end position="21"/>
    </location>
</feature>
<feature type="strand" evidence="5">
    <location>
        <begin position="26"/>
        <end position="28"/>
    </location>
</feature>
<feature type="helix" evidence="5">
    <location>
        <begin position="32"/>
        <end position="45"/>
    </location>
</feature>
<feature type="strand" evidence="5">
    <location>
        <begin position="48"/>
        <end position="54"/>
    </location>
</feature>
<feature type="helix" evidence="5">
    <location>
        <begin position="61"/>
        <end position="82"/>
    </location>
</feature>
<feature type="strand" evidence="5">
    <location>
        <begin position="89"/>
        <end position="96"/>
    </location>
</feature>
<feature type="strand" evidence="5">
    <location>
        <begin position="99"/>
        <end position="106"/>
    </location>
</feature>
<feature type="strand" evidence="5">
    <location>
        <begin position="112"/>
        <end position="116"/>
    </location>
</feature>
<feature type="strand" evidence="5">
    <location>
        <begin position="122"/>
        <end position="124"/>
    </location>
</feature>
<feature type="helix" evidence="5">
    <location>
        <begin position="131"/>
        <end position="142"/>
    </location>
</feature>
<feature type="strand" evidence="5">
    <location>
        <begin position="146"/>
        <end position="153"/>
    </location>
</feature>
<feature type="helix" evidence="5">
    <location>
        <begin position="157"/>
        <end position="175"/>
    </location>
</feature>
<dbReference type="EC" id="4.2.1.19" evidence="2"/>
<dbReference type="EMBL" id="BA000018">
    <property type="protein sequence ID" value="BAB43774.1"/>
    <property type="molecule type" value="Genomic_DNA"/>
</dbReference>
<dbReference type="PIR" id="D90076">
    <property type="entry name" value="D90076"/>
</dbReference>
<dbReference type="RefSeq" id="WP_000640266.1">
    <property type="nucleotide sequence ID" value="NC_002745.2"/>
</dbReference>
<dbReference type="PDB" id="2AE8">
    <property type="method" value="X-ray"/>
    <property type="resolution" value="2.01 A"/>
    <property type="chains" value="A/B/C/D/E/F=1-192"/>
</dbReference>
<dbReference type="PDBsum" id="2AE8"/>
<dbReference type="SMR" id="P64373"/>
<dbReference type="EnsemblBacteria" id="BAB43774">
    <property type="protein sequence ID" value="BAB43774"/>
    <property type="gene ID" value="BAB43774"/>
</dbReference>
<dbReference type="KEGG" id="sau:SA2468"/>
<dbReference type="HOGENOM" id="CLU_044308_3_0_9"/>
<dbReference type="UniPathway" id="UPA00031">
    <property type="reaction ID" value="UER00011"/>
</dbReference>
<dbReference type="EvolutionaryTrace" id="P64373"/>
<dbReference type="GO" id="GO:0005737">
    <property type="term" value="C:cytoplasm"/>
    <property type="evidence" value="ECO:0007669"/>
    <property type="project" value="UniProtKB-SubCell"/>
</dbReference>
<dbReference type="GO" id="GO:0004424">
    <property type="term" value="F:imidazoleglycerol-phosphate dehydratase activity"/>
    <property type="evidence" value="ECO:0007669"/>
    <property type="project" value="UniProtKB-UniRule"/>
</dbReference>
<dbReference type="GO" id="GO:0046872">
    <property type="term" value="F:metal ion binding"/>
    <property type="evidence" value="ECO:0007669"/>
    <property type="project" value="UniProtKB-KW"/>
</dbReference>
<dbReference type="GO" id="GO:0000105">
    <property type="term" value="P:L-histidine biosynthetic process"/>
    <property type="evidence" value="ECO:0007669"/>
    <property type="project" value="UniProtKB-UniRule"/>
</dbReference>
<dbReference type="CDD" id="cd07914">
    <property type="entry name" value="IGPD"/>
    <property type="match status" value="1"/>
</dbReference>
<dbReference type="FunFam" id="3.30.230.40:FF:000001">
    <property type="entry name" value="Imidazoleglycerol-phosphate dehydratase HisB"/>
    <property type="match status" value="1"/>
</dbReference>
<dbReference type="FunFam" id="3.30.230.40:FF:000003">
    <property type="entry name" value="Imidazoleglycerol-phosphate dehydratase HisB"/>
    <property type="match status" value="1"/>
</dbReference>
<dbReference type="Gene3D" id="3.30.230.40">
    <property type="entry name" value="Imidazole glycerol phosphate dehydratase, domain 1"/>
    <property type="match status" value="2"/>
</dbReference>
<dbReference type="HAMAP" id="MF_00076">
    <property type="entry name" value="HisB"/>
    <property type="match status" value="1"/>
</dbReference>
<dbReference type="InterPro" id="IPR038494">
    <property type="entry name" value="IGPD_sf"/>
</dbReference>
<dbReference type="InterPro" id="IPR000807">
    <property type="entry name" value="ImidazoleglycerolP_deHydtase"/>
</dbReference>
<dbReference type="InterPro" id="IPR020565">
    <property type="entry name" value="ImidazoleglycerP_deHydtase_CS"/>
</dbReference>
<dbReference type="InterPro" id="IPR020568">
    <property type="entry name" value="Ribosomal_Su5_D2-typ_SF"/>
</dbReference>
<dbReference type="NCBIfam" id="NF002107">
    <property type="entry name" value="PRK00951.1-2"/>
    <property type="match status" value="1"/>
</dbReference>
<dbReference type="NCBIfam" id="NF002111">
    <property type="entry name" value="PRK00951.2-1"/>
    <property type="match status" value="1"/>
</dbReference>
<dbReference type="NCBIfam" id="NF002114">
    <property type="entry name" value="PRK00951.2-4"/>
    <property type="match status" value="1"/>
</dbReference>
<dbReference type="PANTHER" id="PTHR23133:SF2">
    <property type="entry name" value="IMIDAZOLEGLYCEROL-PHOSPHATE DEHYDRATASE"/>
    <property type="match status" value="1"/>
</dbReference>
<dbReference type="PANTHER" id="PTHR23133">
    <property type="entry name" value="IMIDAZOLEGLYCEROL-PHOSPHATE DEHYDRATASE HIS7"/>
    <property type="match status" value="1"/>
</dbReference>
<dbReference type="Pfam" id="PF00475">
    <property type="entry name" value="IGPD"/>
    <property type="match status" value="1"/>
</dbReference>
<dbReference type="SUPFAM" id="SSF54211">
    <property type="entry name" value="Ribosomal protein S5 domain 2-like"/>
    <property type="match status" value="2"/>
</dbReference>
<dbReference type="PROSITE" id="PS00954">
    <property type="entry name" value="IGP_DEHYDRATASE_1"/>
    <property type="match status" value="1"/>
</dbReference>
<dbReference type="PROSITE" id="PS00955">
    <property type="entry name" value="IGP_DEHYDRATASE_2"/>
    <property type="match status" value="1"/>
</dbReference>
<sequence length="192" mass="21456">MIYQKQRNTAETQLNISISDDQSPSHINTGVGFLNHMLTLFTFHSGLSLNIEAQGDIDVDDHHVTEDIGIVIGQLLLEMIKDKKHFVRYGTMYIPMDETLARVVVDISGRPYLSFNASLSKEKVGTFDTELVEEFFRAVVINARLTTHIDLIRGGNTHHEIEAIFKAFSRALGIALTATDDQRVPSSKGVIE</sequence>
<evidence type="ECO:0000250" key="1">
    <source>
        <dbReference type="UniProtKB" id="O23346"/>
    </source>
</evidence>
<evidence type="ECO:0000255" key="2">
    <source>
        <dbReference type="HAMAP-Rule" id="MF_00076"/>
    </source>
</evidence>
<evidence type="ECO:0000305" key="3">
    <source ref="2"/>
</evidence>
<evidence type="ECO:0007744" key="4">
    <source>
        <dbReference type="PDB" id="2AE8"/>
    </source>
</evidence>
<evidence type="ECO:0007829" key="5">
    <source>
        <dbReference type="PDB" id="2AE8"/>
    </source>
</evidence>
<reference key="1">
    <citation type="journal article" date="2001" name="Lancet">
        <title>Whole genome sequencing of meticillin-resistant Staphylococcus aureus.</title>
        <authorList>
            <person name="Kuroda M."/>
            <person name="Ohta T."/>
            <person name="Uchiyama I."/>
            <person name="Baba T."/>
            <person name="Yuzawa H."/>
            <person name="Kobayashi I."/>
            <person name="Cui L."/>
            <person name="Oguchi A."/>
            <person name="Aoki K."/>
            <person name="Nagai Y."/>
            <person name="Lian J.-Q."/>
            <person name="Ito T."/>
            <person name="Kanamori M."/>
            <person name="Matsumaru H."/>
            <person name="Maruyama A."/>
            <person name="Murakami H."/>
            <person name="Hosoyama A."/>
            <person name="Mizutani-Ui Y."/>
            <person name="Takahashi N.K."/>
            <person name="Sawano T."/>
            <person name="Inoue R."/>
            <person name="Kaito C."/>
            <person name="Sekimizu K."/>
            <person name="Hirakawa H."/>
            <person name="Kuhara S."/>
            <person name="Goto S."/>
            <person name="Yabuzaki J."/>
            <person name="Kanehisa M."/>
            <person name="Yamashita A."/>
            <person name="Oshima K."/>
            <person name="Furuya K."/>
            <person name="Yoshino C."/>
            <person name="Shiba T."/>
            <person name="Hattori M."/>
            <person name="Ogasawara N."/>
            <person name="Hayashi H."/>
            <person name="Hiramatsu K."/>
        </authorList>
    </citation>
    <scope>NUCLEOTIDE SEQUENCE [LARGE SCALE GENOMIC DNA]</scope>
    <source>
        <strain>N315</strain>
    </source>
</reference>
<reference key="2">
    <citation type="submission" date="2005-07" db="PDB data bank">
        <title>Crystal structure of imidazoleglycerol-phosphate dehydratase from Staphylococcus aureus subsp. aureus N315.</title>
        <authorList>
            <person name="Kim Y."/>
            <person name="Quartey P."/>
            <person name="Holzle D."/>
            <person name="Collart F."/>
            <person name="Joachimiak A."/>
        </authorList>
    </citation>
    <scope>X-RAY CRYSTALLOGRAPHY (2.01 ANGSTROMS) IN COMPLEX WITH MAGNESIUM</scope>
    <scope>COFACTOR</scope>
</reference>
<accession>P64373</accession>
<accession>Q99QW5</accession>
<organism>
    <name type="scientific">Staphylococcus aureus (strain N315)</name>
    <dbReference type="NCBI Taxonomy" id="158879"/>
    <lineage>
        <taxon>Bacteria</taxon>
        <taxon>Bacillati</taxon>
        <taxon>Bacillota</taxon>
        <taxon>Bacilli</taxon>
        <taxon>Bacillales</taxon>
        <taxon>Staphylococcaceae</taxon>
        <taxon>Staphylococcus</taxon>
    </lineage>
</organism>
<comment type="catalytic activity">
    <reaction evidence="2">
        <text>D-erythro-1-(imidazol-4-yl)glycerol 3-phosphate = 3-(imidazol-4-yl)-2-oxopropyl phosphate + H2O</text>
        <dbReference type="Rhea" id="RHEA:11040"/>
        <dbReference type="ChEBI" id="CHEBI:15377"/>
        <dbReference type="ChEBI" id="CHEBI:57766"/>
        <dbReference type="ChEBI" id="CHEBI:58278"/>
        <dbReference type="EC" id="4.2.1.19"/>
    </reaction>
</comment>
<comment type="cofactor">
    <cofactor evidence="3">
        <name>Mn(2+)</name>
        <dbReference type="ChEBI" id="CHEBI:29035"/>
    </cofactor>
    <text evidence="3">Binds 2 manganese ions per subunit.</text>
</comment>
<comment type="pathway">
    <text evidence="2">Amino-acid biosynthesis; L-histidine biosynthesis; L-histidine from 5-phospho-alpha-D-ribose 1-diphosphate: step 6/9.</text>
</comment>
<comment type="subcellular location">
    <subcellularLocation>
        <location evidence="2">Cytoplasm</location>
    </subcellularLocation>
</comment>
<comment type="similarity">
    <text evidence="2">Belongs to the imidazoleglycerol-phosphate dehydratase family.</text>
</comment>
<proteinExistence type="evidence at protein level"/>
<keyword id="KW-0002">3D-structure</keyword>
<keyword id="KW-0028">Amino-acid biosynthesis</keyword>
<keyword id="KW-0963">Cytoplasm</keyword>
<keyword id="KW-0368">Histidine biosynthesis</keyword>
<keyword id="KW-0456">Lyase</keyword>
<keyword id="KW-0464">Manganese</keyword>
<keyword id="KW-0479">Metal-binding</keyword>